<organism>
    <name type="scientific">Yersinia pseudotuberculosis serotype O:1b (strain IP 31758)</name>
    <dbReference type="NCBI Taxonomy" id="349747"/>
    <lineage>
        <taxon>Bacteria</taxon>
        <taxon>Pseudomonadati</taxon>
        <taxon>Pseudomonadota</taxon>
        <taxon>Gammaproteobacteria</taxon>
        <taxon>Enterobacterales</taxon>
        <taxon>Yersiniaceae</taxon>
        <taxon>Yersinia</taxon>
    </lineage>
</organism>
<comment type="function">
    <text evidence="1">Involved in the synthesis of autoinducer 2 (AI-2) which is secreted by bacteria and is used to communicate both the cell density and the metabolic potential of the environment. The regulation of gene expression in response to changes in cell density is called quorum sensing. Catalyzes the transformation of S-ribosylhomocysteine (RHC) to homocysteine (HC) and 4,5-dihydroxy-2,3-pentadione (DPD).</text>
</comment>
<comment type="catalytic activity">
    <reaction evidence="1">
        <text>S-(5-deoxy-D-ribos-5-yl)-L-homocysteine = (S)-4,5-dihydroxypentane-2,3-dione + L-homocysteine</text>
        <dbReference type="Rhea" id="RHEA:17753"/>
        <dbReference type="ChEBI" id="CHEBI:29484"/>
        <dbReference type="ChEBI" id="CHEBI:58195"/>
        <dbReference type="ChEBI" id="CHEBI:58199"/>
        <dbReference type="EC" id="4.4.1.21"/>
    </reaction>
</comment>
<comment type="cofactor">
    <cofactor evidence="1">
        <name>Fe cation</name>
        <dbReference type="ChEBI" id="CHEBI:24875"/>
    </cofactor>
    <text evidence="1">Binds 1 Fe cation per subunit.</text>
</comment>
<comment type="subunit">
    <text evidence="1">Homodimer.</text>
</comment>
<comment type="similarity">
    <text evidence="1">Belongs to the LuxS family.</text>
</comment>
<keyword id="KW-0071">Autoinducer synthesis</keyword>
<keyword id="KW-0408">Iron</keyword>
<keyword id="KW-0456">Lyase</keyword>
<keyword id="KW-0479">Metal-binding</keyword>
<keyword id="KW-0673">Quorum sensing</keyword>
<evidence type="ECO:0000255" key="1">
    <source>
        <dbReference type="HAMAP-Rule" id="MF_00091"/>
    </source>
</evidence>
<sequence>MPLLDSFTVDHTIMKAPAVRVAKTMKTPHGDEITVFDLRFCVPNKEVMPEKGIHTLEHLFAGFMRDHLNGDGVEIIDISPMGCRTGFYMSLIGTPDEQRVADAWKAAMADVLKVTDQRKIPELNEYQCGTYHMHSLEEAQSIAKDILDRDVRINHNEELALPKEKLTELHI</sequence>
<accession>A7FLR2</accession>
<feature type="chain" id="PRO_1000057610" description="S-ribosylhomocysteine lyase">
    <location>
        <begin position="1"/>
        <end position="171"/>
    </location>
</feature>
<feature type="binding site" evidence="1">
    <location>
        <position position="54"/>
    </location>
    <ligand>
        <name>Fe cation</name>
        <dbReference type="ChEBI" id="CHEBI:24875"/>
    </ligand>
</feature>
<feature type="binding site" evidence="1">
    <location>
        <position position="58"/>
    </location>
    <ligand>
        <name>Fe cation</name>
        <dbReference type="ChEBI" id="CHEBI:24875"/>
    </ligand>
</feature>
<feature type="binding site" evidence="1">
    <location>
        <position position="128"/>
    </location>
    <ligand>
        <name>Fe cation</name>
        <dbReference type="ChEBI" id="CHEBI:24875"/>
    </ligand>
</feature>
<proteinExistence type="inferred from homology"/>
<reference key="1">
    <citation type="journal article" date="2007" name="PLoS Genet.">
        <title>The complete genome sequence of Yersinia pseudotuberculosis IP31758, the causative agent of Far East scarlet-like fever.</title>
        <authorList>
            <person name="Eppinger M."/>
            <person name="Rosovitz M.J."/>
            <person name="Fricke W.F."/>
            <person name="Rasko D.A."/>
            <person name="Kokorina G."/>
            <person name="Fayolle C."/>
            <person name="Lindler L.E."/>
            <person name="Carniel E."/>
            <person name="Ravel J."/>
        </authorList>
    </citation>
    <scope>NUCLEOTIDE SEQUENCE [LARGE SCALE GENOMIC DNA]</scope>
    <source>
        <strain>IP 31758</strain>
    </source>
</reference>
<protein>
    <recommendedName>
        <fullName evidence="1">S-ribosylhomocysteine lyase</fullName>
        <ecNumber evidence="1">4.4.1.21</ecNumber>
    </recommendedName>
    <alternativeName>
        <fullName evidence="1">AI-2 synthesis protein</fullName>
    </alternativeName>
    <alternativeName>
        <fullName evidence="1">Autoinducer-2 production protein LuxS</fullName>
    </alternativeName>
</protein>
<dbReference type="EC" id="4.4.1.21" evidence="1"/>
<dbReference type="EMBL" id="CP000720">
    <property type="protein sequence ID" value="ABS49435.1"/>
    <property type="molecule type" value="Genomic_DNA"/>
</dbReference>
<dbReference type="RefSeq" id="WP_002209453.1">
    <property type="nucleotide sequence ID" value="NC_009708.1"/>
</dbReference>
<dbReference type="SMR" id="A7FLR2"/>
<dbReference type="GeneID" id="57975413"/>
<dbReference type="KEGG" id="ypi:YpsIP31758_3233"/>
<dbReference type="HOGENOM" id="CLU_107531_2_0_6"/>
<dbReference type="Proteomes" id="UP000002412">
    <property type="component" value="Chromosome"/>
</dbReference>
<dbReference type="GO" id="GO:0005506">
    <property type="term" value="F:iron ion binding"/>
    <property type="evidence" value="ECO:0007669"/>
    <property type="project" value="InterPro"/>
</dbReference>
<dbReference type="GO" id="GO:0043768">
    <property type="term" value="F:S-ribosylhomocysteine lyase activity"/>
    <property type="evidence" value="ECO:0007669"/>
    <property type="project" value="UniProtKB-UniRule"/>
</dbReference>
<dbReference type="GO" id="GO:0009372">
    <property type="term" value="P:quorum sensing"/>
    <property type="evidence" value="ECO:0007669"/>
    <property type="project" value="UniProtKB-UniRule"/>
</dbReference>
<dbReference type="FunFam" id="3.30.1360.80:FF:000001">
    <property type="entry name" value="S-ribosylhomocysteine lyase"/>
    <property type="match status" value="1"/>
</dbReference>
<dbReference type="Gene3D" id="3.30.1360.80">
    <property type="entry name" value="S-ribosylhomocysteinase (LuxS)"/>
    <property type="match status" value="1"/>
</dbReference>
<dbReference type="HAMAP" id="MF_00091">
    <property type="entry name" value="LuxS"/>
    <property type="match status" value="1"/>
</dbReference>
<dbReference type="InterPro" id="IPR037005">
    <property type="entry name" value="LuxS_sf"/>
</dbReference>
<dbReference type="InterPro" id="IPR011249">
    <property type="entry name" value="Metalloenz_LuxS/M16"/>
</dbReference>
<dbReference type="InterPro" id="IPR003815">
    <property type="entry name" value="S-ribosylhomocysteinase"/>
</dbReference>
<dbReference type="NCBIfam" id="NF002602">
    <property type="entry name" value="PRK02260.1-2"/>
    <property type="match status" value="1"/>
</dbReference>
<dbReference type="PANTHER" id="PTHR35799">
    <property type="entry name" value="S-RIBOSYLHOMOCYSTEINE LYASE"/>
    <property type="match status" value="1"/>
</dbReference>
<dbReference type="PANTHER" id="PTHR35799:SF1">
    <property type="entry name" value="S-RIBOSYLHOMOCYSTEINE LYASE"/>
    <property type="match status" value="1"/>
</dbReference>
<dbReference type="Pfam" id="PF02664">
    <property type="entry name" value="LuxS"/>
    <property type="match status" value="1"/>
</dbReference>
<dbReference type="PIRSF" id="PIRSF006160">
    <property type="entry name" value="AI2"/>
    <property type="match status" value="1"/>
</dbReference>
<dbReference type="PRINTS" id="PR01487">
    <property type="entry name" value="LUXSPROTEIN"/>
</dbReference>
<dbReference type="SUPFAM" id="SSF63411">
    <property type="entry name" value="LuxS/MPP-like metallohydrolase"/>
    <property type="match status" value="1"/>
</dbReference>
<name>LUXS_YERP3</name>
<gene>
    <name evidence="1" type="primary">luxS</name>
    <name type="ordered locus">YpsIP31758_3233</name>
</gene>